<sequence length="259" mass="28429">MMQKQNMIVVNQKEIAKNIYELVLQGTLVQQMNEPGQFVHIKVAEGIAPLLRRPISICNVDQEKNEFTMLYRAEGQGTKTLATRKQGEMVDVLGPLGHGFPVEEAEAGQTALLVGGGIGVSPLYELSQRLVAKGVRVIHILGFQTKDVVFYEEKFAELGDTYVATVDGTHGTKGFVTDVIDHYGIDFDILYSCGPLAMLRALEGRYKEKKAYISLEERMGCGIGACFACVCHLQEDPSGHSYKKVCSDGPVFPIGEVVL</sequence>
<protein>
    <recommendedName>
        <fullName evidence="1">Dihydroorotate dehydrogenase B (NAD(+)), electron transfer subunit</fullName>
    </recommendedName>
    <alternativeName>
        <fullName evidence="1">Dihydroorotate oxidase B, electron transfer subunit</fullName>
    </alternativeName>
</protein>
<reference key="1">
    <citation type="journal article" date="2009" name="J. Bacteriol.">
        <title>Complete genome sequence of the extremophilic Bacillus cereus strain Q1 with industrial applications.</title>
        <authorList>
            <person name="Xiong Z."/>
            <person name="Jiang Y."/>
            <person name="Qi D."/>
            <person name="Lu H."/>
            <person name="Yang F."/>
            <person name="Yang J."/>
            <person name="Chen L."/>
            <person name="Sun L."/>
            <person name="Xu X."/>
            <person name="Xue Y."/>
            <person name="Zhu Y."/>
            <person name="Jin Q."/>
        </authorList>
    </citation>
    <scope>NUCLEOTIDE SEQUENCE [LARGE SCALE GENOMIC DNA]</scope>
    <source>
        <strain>Q1</strain>
    </source>
</reference>
<evidence type="ECO:0000255" key="1">
    <source>
        <dbReference type="HAMAP-Rule" id="MF_01211"/>
    </source>
</evidence>
<dbReference type="EMBL" id="CP000227">
    <property type="protein sequence ID" value="ACM14099.1"/>
    <property type="molecule type" value="Genomic_DNA"/>
</dbReference>
<dbReference type="SMR" id="B9IVW2"/>
<dbReference type="KEGG" id="bcq:BCQ_3671"/>
<dbReference type="HOGENOM" id="CLU_003827_1_2_9"/>
<dbReference type="UniPathway" id="UPA00070">
    <property type="reaction ID" value="UER00945"/>
</dbReference>
<dbReference type="Proteomes" id="UP000000441">
    <property type="component" value="Chromosome"/>
</dbReference>
<dbReference type="GO" id="GO:0051537">
    <property type="term" value="F:2 iron, 2 sulfur cluster binding"/>
    <property type="evidence" value="ECO:0007669"/>
    <property type="project" value="UniProtKB-KW"/>
</dbReference>
<dbReference type="GO" id="GO:0009055">
    <property type="term" value="F:electron transfer activity"/>
    <property type="evidence" value="ECO:0007669"/>
    <property type="project" value="UniProtKB-UniRule"/>
</dbReference>
<dbReference type="GO" id="GO:0050660">
    <property type="term" value="F:flavin adenine dinucleotide binding"/>
    <property type="evidence" value="ECO:0007669"/>
    <property type="project" value="InterPro"/>
</dbReference>
<dbReference type="GO" id="GO:0046872">
    <property type="term" value="F:metal ion binding"/>
    <property type="evidence" value="ECO:0007669"/>
    <property type="project" value="UniProtKB-KW"/>
</dbReference>
<dbReference type="GO" id="GO:0016491">
    <property type="term" value="F:oxidoreductase activity"/>
    <property type="evidence" value="ECO:0007669"/>
    <property type="project" value="InterPro"/>
</dbReference>
<dbReference type="GO" id="GO:0044205">
    <property type="term" value="P:'de novo' UMP biosynthetic process"/>
    <property type="evidence" value="ECO:0007669"/>
    <property type="project" value="UniProtKB-UniRule"/>
</dbReference>
<dbReference type="CDD" id="cd06218">
    <property type="entry name" value="DHOD_e_trans"/>
    <property type="match status" value="1"/>
</dbReference>
<dbReference type="FunFam" id="2.10.240.10:FF:000001">
    <property type="entry name" value="Dihydroorotate dehydrogenase B (NAD(+)), electron transfer subunit"/>
    <property type="match status" value="1"/>
</dbReference>
<dbReference type="FunFam" id="2.40.30.10:FF:000045">
    <property type="entry name" value="Dihydroorotate dehydrogenase B (NAD(+)), electron transfer subunit"/>
    <property type="match status" value="1"/>
</dbReference>
<dbReference type="FunFam" id="3.40.50.80:FF:000017">
    <property type="entry name" value="Dihydroorotate dehydrogenase B (NAD(+)), electron transfer subunit"/>
    <property type="match status" value="1"/>
</dbReference>
<dbReference type="Gene3D" id="2.10.240.10">
    <property type="entry name" value="Dihydroorotate dehydrogenase, electron transfer subunit"/>
    <property type="match status" value="1"/>
</dbReference>
<dbReference type="Gene3D" id="3.40.50.80">
    <property type="entry name" value="Nucleotide-binding domain of ferredoxin-NADP reductase (FNR) module"/>
    <property type="match status" value="1"/>
</dbReference>
<dbReference type="Gene3D" id="2.40.30.10">
    <property type="entry name" value="Translation factors"/>
    <property type="match status" value="1"/>
</dbReference>
<dbReference type="HAMAP" id="MF_01211">
    <property type="entry name" value="DHODB_Fe_S_bind"/>
    <property type="match status" value="1"/>
</dbReference>
<dbReference type="InterPro" id="IPR012165">
    <property type="entry name" value="Cyt_c3_hydrogenase_gsu"/>
</dbReference>
<dbReference type="InterPro" id="IPR037117">
    <property type="entry name" value="Dihydroorotate_DH_ele_sf"/>
</dbReference>
<dbReference type="InterPro" id="IPR019480">
    <property type="entry name" value="Dihydroorotate_DH_Fe-S-bd"/>
</dbReference>
<dbReference type="InterPro" id="IPR023455">
    <property type="entry name" value="Dihydroorotate_DHASE_ETsu"/>
</dbReference>
<dbReference type="InterPro" id="IPR017927">
    <property type="entry name" value="FAD-bd_FR_type"/>
</dbReference>
<dbReference type="InterPro" id="IPR039261">
    <property type="entry name" value="FNR_nucleotide-bd"/>
</dbReference>
<dbReference type="InterPro" id="IPR001433">
    <property type="entry name" value="OxRdtase_FAD/NAD-bd"/>
</dbReference>
<dbReference type="InterPro" id="IPR050353">
    <property type="entry name" value="PyrK_electron_transfer"/>
</dbReference>
<dbReference type="InterPro" id="IPR017938">
    <property type="entry name" value="Riboflavin_synthase-like_b-brl"/>
</dbReference>
<dbReference type="NCBIfam" id="NF000797">
    <property type="entry name" value="PRK00054.1-2"/>
    <property type="match status" value="1"/>
</dbReference>
<dbReference type="NCBIfam" id="NF000799">
    <property type="entry name" value="PRK00054.1-4"/>
    <property type="match status" value="1"/>
</dbReference>
<dbReference type="PANTHER" id="PTHR43513">
    <property type="entry name" value="DIHYDROOROTATE DEHYDROGENASE B (NAD(+)), ELECTRON TRANSFER SUBUNIT"/>
    <property type="match status" value="1"/>
</dbReference>
<dbReference type="PANTHER" id="PTHR43513:SF3">
    <property type="entry name" value="DIHYDROOROTATE DEHYDROGENASE B (NAD(+)), ELECTRON TRANSFER SUBUNIT-RELATED"/>
    <property type="match status" value="1"/>
</dbReference>
<dbReference type="Pfam" id="PF10418">
    <property type="entry name" value="DHODB_Fe-S_bind"/>
    <property type="match status" value="1"/>
</dbReference>
<dbReference type="Pfam" id="PF00175">
    <property type="entry name" value="NAD_binding_1"/>
    <property type="match status" value="1"/>
</dbReference>
<dbReference type="PIRSF" id="PIRSF006816">
    <property type="entry name" value="Cyc3_hyd_g"/>
    <property type="match status" value="1"/>
</dbReference>
<dbReference type="PRINTS" id="PR00409">
    <property type="entry name" value="PHDIOXRDTASE"/>
</dbReference>
<dbReference type="SUPFAM" id="SSF52343">
    <property type="entry name" value="Ferredoxin reductase-like, C-terminal NADP-linked domain"/>
    <property type="match status" value="1"/>
</dbReference>
<dbReference type="SUPFAM" id="SSF63380">
    <property type="entry name" value="Riboflavin synthase domain-like"/>
    <property type="match status" value="1"/>
</dbReference>
<dbReference type="PROSITE" id="PS51384">
    <property type="entry name" value="FAD_FR"/>
    <property type="match status" value="1"/>
</dbReference>
<feature type="chain" id="PRO_1000164727" description="Dihydroorotate dehydrogenase B (NAD(+)), electron transfer subunit">
    <location>
        <begin position="1"/>
        <end position="259"/>
    </location>
</feature>
<feature type="domain" description="FAD-binding FR-type" evidence="1">
    <location>
        <begin position="2"/>
        <end position="102"/>
    </location>
</feature>
<feature type="binding site" evidence="1">
    <location>
        <begin position="53"/>
        <end position="56"/>
    </location>
    <ligand>
        <name>FAD</name>
        <dbReference type="ChEBI" id="CHEBI:57692"/>
    </ligand>
</feature>
<feature type="binding site" evidence="1">
    <location>
        <begin position="70"/>
        <end position="72"/>
    </location>
    <ligand>
        <name>FAD</name>
        <dbReference type="ChEBI" id="CHEBI:57692"/>
    </ligand>
</feature>
<feature type="binding site" evidence="1">
    <location>
        <begin position="77"/>
        <end position="78"/>
    </location>
    <ligand>
        <name>FAD</name>
        <dbReference type="ChEBI" id="CHEBI:57692"/>
    </ligand>
</feature>
<feature type="binding site" evidence="1">
    <location>
        <position position="221"/>
    </location>
    <ligand>
        <name>[2Fe-2S] cluster</name>
        <dbReference type="ChEBI" id="CHEBI:190135"/>
    </ligand>
</feature>
<feature type="binding site" evidence="1">
    <location>
        <position position="226"/>
    </location>
    <ligand>
        <name>[2Fe-2S] cluster</name>
        <dbReference type="ChEBI" id="CHEBI:190135"/>
    </ligand>
</feature>
<feature type="binding site" evidence="1">
    <location>
        <position position="229"/>
    </location>
    <ligand>
        <name>[2Fe-2S] cluster</name>
        <dbReference type="ChEBI" id="CHEBI:190135"/>
    </ligand>
</feature>
<feature type="binding site" evidence="1">
    <location>
        <position position="246"/>
    </location>
    <ligand>
        <name>[2Fe-2S] cluster</name>
        <dbReference type="ChEBI" id="CHEBI:190135"/>
    </ligand>
</feature>
<organism>
    <name type="scientific">Bacillus cereus (strain Q1)</name>
    <dbReference type="NCBI Taxonomy" id="361100"/>
    <lineage>
        <taxon>Bacteria</taxon>
        <taxon>Bacillati</taxon>
        <taxon>Bacillota</taxon>
        <taxon>Bacilli</taxon>
        <taxon>Bacillales</taxon>
        <taxon>Bacillaceae</taxon>
        <taxon>Bacillus</taxon>
        <taxon>Bacillus cereus group</taxon>
    </lineage>
</organism>
<comment type="function">
    <text evidence="1">Responsible for channeling the electrons from the oxidation of dihydroorotate from the FMN redox center in the PyrD type B subunit to the ultimate electron acceptor NAD(+).</text>
</comment>
<comment type="cofactor">
    <cofactor evidence="1">
        <name>[2Fe-2S] cluster</name>
        <dbReference type="ChEBI" id="CHEBI:190135"/>
    </cofactor>
    <text evidence="1">Binds 1 [2Fe-2S] cluster per subunit.</text>
</comment>
<comment type="cofactor">
    <cofactor evidence="1">
        <name>FAD</name>
        <dbReference type="ChEBI" id="CHEBI:57692"/>
    </cofactor>
    <text evidence="1">Binds 1 FAD per subunit.</text>
</comment>
<comment type="pathway">
    <text evidence="1">Pyrimidine metabolism; UMP biosynthesis via de novo pathway; orotate from (S)-dihydroorotate (NAD(+) route): step 1/1.</text>
</comment>
<comment type="subunit">
    <text evidence="1">Heterotetramer of 2 PyrK and 2 PyrD type B subunits.</text>
</comment>
<comment type="similarity">
    <text evidence="1">Belongs to the PyrK family.</text>
</comment>
<keyword id="KW-0001">2Fe-2S</keyword>
<keyword id="KW-0249">Electron transport</keyword>
<keyword id="KW-0274">FAD</keyword>
<keyword id="KW-0285">Flavoprotein</keyword>
<keyword id="KW-0408">Iron</keyword>
<keyword id="KW-0411">Iron-sulfur</keyword>
<keyword id="KW-0479">Metal-binding</keyword>
<keyword id="KW-0665">Pyrimidine biosynthesis</keyword>
<keyword id="KW-0813">Transport</keyword>
<name>PYRK_BACCQ</name>
<gene>
    <name evidence="1" type="primary">pyrK</name>
    <name type="ordered locus">BCQ_3671</name>
</gene>
<proteinExistence type="inferred from homology"/>
<accession>B9IVW2</accession>